<accession>Q9D342</accession>
<accession>A6H6Q8</accession>
<sequence length="144" mass="15224">MEREGSGGGGGSAGLLQQILSLKLVPRVGNGTLCPNSTSLCSFPEMWYGVFLWALMSSVFFHVPAGLLALFTLRHHKYGRFMSVSILLMGIVGPITAGILTSAAIAGVYRAAGKEMIPFEALTLGTGQTFCVVVVSFLRVLATL</sequence>
<gene>
    <name type="primary">Tmem170a</name>
    <name type="synonym">D8Bwg1414e</name>
    <name type="synonym">Tmem170</name>
</gene>
<feature type="chain" id="PRO_0000291760" description="Transmembrane protein 170A">
    <location>
        <begin position="1"/>
        <end position="144"/>
    </location>
</feature>
<feature type="topological domain" description="Extracellular" evidence="1">
    <location>
        <begin position="1"/>
        <end position="50"/>
    </location>
</feature>
<feature type="transmembrane region" description="Helical" evidence="2">
    <location>
        <begin position="51"/>
        <end position="71"/>
    </location>
</feature>
<feature type="topological domain" description="Cytoplasmic" evidence="1">
    <location>
        <begin position="72"/>
        <end position="85"/>
    </location>
</feature>
<feature type="transmembrane region" description="Helical" evidence="2">
    <location>
        <begin position="86"/>
        <end position="106"/>
    </location>
</feature>
<feature type="topological domain" description="Extracellular" evidence="1">
    <location>
        <begin position="107"/>
        <end position="116"/>
    </location>
</feature>
<feature type="transmembrane region" description="Helical" evidence="2">
    <location>
        <begin position="117"/>
        <end position="137"/>
    </location>
</feature>
<feature type="topological domain" description="Cytoplasmic" evidence="1">
    <location>
        <begin position="138"/>
        <end position="144"/>
    </location>
</feature>
<feature type="glycosylation site" description="N-linked (GlcNAc...) asparagine" evidence="2">
    <location>
        <position position="30"/>
    </location>
</feature>
<feature type="glycosylation site" description="N-linked (GlcNAc...) asparagine" evidence="2">
    <location>
        <position position="36"/>
    </location>
</feature>
<organism>
    <name type="scientific">Mus musculus</name>
    <name type="common">Mouse</name>
    <dbReference type="NCBI Taxonomy" id="10090"/>
    <lineage>
        <taxon>Eukaryota</taxon>
        <taxon>Metazoa</taxon>
        <taxon>Chordata</taxon>
        <taxon>Craniata</taxon>
        <taxon>Vertebrata</taxon>
        <taxon>Euteleostomi</taxon>
        <taxon>Mammalia</taxon>
        <taxon>Eutheria</taxon>
        <taxon>Euarchontoglires</taxon>
        <taxon>Glires</taxon>
        <taxon>Rodentia</taxon>
        <taxon>Myomorpha</taxon>
        <taxon>Muroidea</taxon>
        <taxon>Muridae</taxon>
        <taxon>Murinae</taxon>
        <taxon>Mus</taxon>
        <taxon>Mus</taxon>
    </lineage>
</organism>
<reference key="1">
    <citation type="journal article" date="2005" name="Science">
        <title>The transcriptional landscape of the mammalian genome.</title>
        <authorList>
            <person name="Carninci P."/>
            <person name="Kasukawa T."/>
            <person name="Katayama S."/>
            <person name="Gough J."/>
            <person name="Frith M.C."/>
            <person name="Maeda N."/>
            <person name="Oyama R."/>
            <person name="Ravasi T."/>
            <person name="Lenhard B."/>
            <person name="Wells C."/>
            <person name="Kodzius R."/>
            <person name="Shimokawa K."/>
            <person name="Bajic V.B."/>
            <person name="Brenner S.E."/>
            <person name="Batalov S."/>
            <person name="Forrest A.R."/>
            <person name="Zavolan M."/>
            <person name="Davis M.J."/>
            <person name="Wilming L.G."/>
            <person name="Aidinis V."/>
            <person name="Allen J.E."/>
            <person name="Ambesi-Impiombato A."/>
            <person name="Apweiler R."/>
            <person name="Aturaliya R.N."/>
            <person name="Bailey T.L."/>
            <person name="Bansal M."/>
            <person name="Baxter L."/>
            <person name="Beisel K.W."/>
            <person name="Bersano T."/>
            <person name="Bono H."/>
            <person name="Chalk A.M."/>
            <person name="Chiu K.P."/>
            <person name="Choudhary V."/>
            <person name="Christoffels A."/>
            <person name="Clutterbuck D.R."/>
            <person name="Crowe M.L."/>
            <person name="Dalla E."/>
            <person name="Dalrymple B.P."/>
            <person name="de Bono B."/>
            <person name="Della Gatta G."/>
            <person name="di Bernardo D."/>
            <person name="Down T."/>
            <person name="Engstrom P."/>
            <person name="Fagiolini M."/>
            <person name="Faulkner G."/>
            <person name="Fletcher C.F."/>
            <person name="Fukushima T."/>
            <person name="Furuno M."/>
            <person name="Futaki S."/>
            <person name="Gariboldi M."/>
            <person name="Georgii-Hemming P."/>
            <person name="Gingeras T.R."/>
            <person name="Gojobori T."/>
            <person name="Green R.E."/>
            <person name="Gustincich S."/>
            <person name="Harbers M."/>
            <person name="Hayashi Y."/>
            <person name="Hensch T.K."/>
            <person name="Hirokawa N."/>
            <person name="Hill D."/>
            <person name="Huminiecki L."/>
            <person name="Iacono M."/>
            <person name="Ikeo K."/>
            <person name="Iwama A."/>
            <person name="Ishikawa T."/>
            <person name="Jakt M."/>
            <person name="Kanapin A."/>
            <person name="Katoh M."/>
            <person name="Kawasawa Y."/>
            <person name="Kelso J."/>
            <person name="Kitamura H."/>
            <person name="Kitano H."/>
            <person name="Kollias G."/>
            <person name="Krishnan S.P."/>
            <person name="Kruger A."/>
            <person name="Kummerfeld S.K."/>
            <person name="Kurochkin I.V."/>
            <person name="Lareau L.F."/>
            <person name="Lazarevic D."/>
            <person name="Lipovich L."/>
            <person name="Liu J."/>
            <person name="Liuni S."/>
            <person name="McWilliam S."/>
            <person name="Madan Babu M."/>
            <person name="Madera M."/>
            <person name="Marchionni L."/>
            <person name="Matsuda H."/>
            <person name="Matsuzawa S."/>
            <person name="Miki H."/>
            <person name="Mignone F."/>
            <person name="Miyake S."/>
            <person name="Morris K."/>
            <person name="Mottagui-Tabar S."/>
            <person name="Mulder N."/>
            <person name="Nakano N."/>
            <person name="Nakauchi H."/>
            <person name="Ng P."/>
            <person name="Nilsson R."/>
            <person name="Nishiguchi S."/>
            <person name="Nishikawa S."/>
            <person name="Nori F."/>
            <person name="Ohara O."/>
            <person name="Okazaki Y."/>
            <person name="Orlando V."/>
            <person name="Pang K.C."/>
            <person name="Pavan W.J."/>
            <person name="Pavesi G."/>
            <person name="Pesole G."/>
            <person name="Petrovsky N."/>
            <person name="Piazza S."/>
            <person name="Reed J."/>
            <person name="Reid J.F."/>
            <person name="Ring B.Z."/>
            <person name="Ringwald M."/>
            <person name="Rost B."/>
            <person name="Ruan Y."/>
            <person name="Salzberg S.L."/>
            <person name="Sandelin A."/>
            <person name="Schneider C."/>
            <person name="Schoenbach C."/>
            <person name="Sekiguchi K."/>
            <person name="Semple C.A."/>
            <person name="Seno S."/>
            <person name="Sessa L."/>
            <person name="Sheng Y."/>
            <person name="Shibata Y."/>
            <person name="Shimada H."/>
            <person name="Shimada K."/>
            <person name="Silva D."/>
            <person name="Sinclair B."/>
            <person name="Sperling S."/>
            <person name="Stupka E."/>
            <person name="Sugiura K."/>
            <person name="Sultana R."/>
            <person name="Takenaka Y."/>
            <person name="Taki K."/>
            <person name="Tammoja K."/>
            <person name="Tan S.L."/>
            <person name="Tang S."/>
            <person name="Taylor M.S."/>
            <person name="Tegner J."/>
            <person name="Teichmann S.A."/>
            <person name="Ueda H.R."/>
            <person name="van Nimwegen E."/>
            <person name="Verardo R."/>
            <person name="Wei C.L."/>
            <person name="Yagi K."/>
            <person name="Yamanishi H."/>
            <person name="Zabarovsky E."/>
            <person name="Zhu S."/>
            <person name="Zimmer A."/>
            <person name="Hide W."/>
            <person name="Bult C."/>
            <person name="Grimmond S.M."/>
            <person name="Teasdale R.D."/>
            <person name="Liu E.T."/>
            <person name="Brusic V."/>
            <person name="Quackenbush J."/>
            <person name="Wahlestedt C."/>
            <person name="Mattick J.S."/>
            <person name="Hume D.A."/>
            <person name="Kai C."/>
            <person name="Sasaki D."/>
            <person name="Tomaru Y."/>
            <person name="Fukuda S."/>
            <person name="Kanamori-Katayama M."/>
            <person name="Suzuki M."/>
            <person name="Aoki J."/>
            <person name="Arakawa T."/>
            <person name="Iida J."/>
            <person name="Imamura K."/>
            <person name="Itoh M."/>
            <person name="Kato T."/>
            <person name="Kawaji H."/>
            <person name="Kawagashira N."/>
            <person name="Kawashima T."/>
            <person name="Kojima M."/>
            <person name="Kondo S."/>
            <person name="Konno H."/>
            <person name="Nakano K."/>
            <person name="Ninomiya N."/>
            <person name="Nishio T."/>
            <person name="Okada M."/>
            <person name="Plessy C."/>
            <person name="Shibata K."/>
            <person name="Shiraki T."/>
            <person name="Suzuki S."/>
            <person name="Tagami M."/>
            <person name="Waki K."/>
            <person name="Watahiki A."/>
            <person name="Okamura-Oho Y."/>
            <person name="Suzuki H."/>
            <person name="Kawai J."/>
            <person name="Hayashizaki Y."/>
        </authorList>
    </citation>
    <scope>NUCLEOTIDE SEQUENCE [LARGE SCALE MRNA]</scope>
    <source>
        <strain>C57BL/6J</strain>
        <tissue>Colon</tissue>
    </source>
</reference>
<reference key="2">
    <citation type="journal article" date="2004" name="Genome Res.">
        <title>The status, quality, and expansion of the NIH full-length cDNA project: the Mammalian Gene Collection (MGC).</title>
        <authorList>
            <consortium name="The MGC Project Team"/>
        </authorList>
    </citation>
    <scope>NUCLEOTIDE SEQUENCE [LARGE SCALE MRNA]</scope>
    <source>
        <tissue>Brain</tissue>
    </source>
</reference>
<keyword id="KW-0256">Endoplasmic reticulum</keyword>
<keyword id="KW-0325">Glycoprotein</keyword>
<keyword id="KW-0472">Membrane</keyword>
<keyword id="KW-0539">Nucleus</keyword>
<keyword id="KW-1185">Reference proteome</keyword>
<keyword id="KW-0812">Transmembrane</keyword>
<keyword id="KW-1133">Transmembrane helix</keyword>
<dbReference type="EMBL" id="AK018496">
    <property type="protein sequence ID" value="BAB31240.1"/>
    <property type="molecule type" value="mRNA"/>
</dbReference>
<dbReference type="EMBL" id="BC139377">
    <property type="protein sequence ID" value="AAI39378.1"/>
    <property type="molecule type" value="mRNA"/>
</dbReference>
<dbReference type="EMBL" id="BC145964">
    <property type="protein sequence ID" value="AAI45965.1"/>
    <property type="molecule type" value="mRNA"/>
</dbReference>
<dbReference type="CCDS" id="CCDS22681.1"/>
<dbReference type="RefSeq" id="NP_080057.1">
    <property type="nucleotide sequence ID" value="NM_025781.2"/>
</dbReference>
<dbReference type="FunCoup" id="Q9D342">
    <property type="interactions" value="1285"/>
</dbReference>
<dbReference type="STRING" id="10090.ENSMUSP00000034431"/>
<dbReference type="GlyCosmos" id="Q9D342">
    <property type="glycosylation" value="2 sites, No reported glycans"/>
</dbReference>
<dbReference type="GlyGen" id="Q9D342">
    <property type="glycosylation" value="2 sites"/>
</dbReference>
<dbReference type="PhosphoSitePlus" id="Q9D342"/>
<dbReference type="PaxDb" id="10090-ENSMUSP00000034431"/>
<dbReference type="ProteomicsDB" id="263221"/>
<dbReference type="Antibodypedia" id="71565">
    <property type="antibodies" value="4 antibodies from 4 providers"/>
</dbReference>
<dbReference type="DNASU" id="66817"/>
<dbReference type="Ensembl" id="ENSMUST00000034431.3">
    <property type="protein sequence ID" value="ENSMUSP00000034431.2"/>
    <property type="gene ID" value="ENSMUSG00000031953.3"/>
</dbReference>
<dbReference type="GeneID" id="66817"/>
<dbReference type="KEGG" id="mmu:66817"/>
<dbReference type="UCSC" id="uc009nmy.1">
    <property type="organism name" value="mouse"/>
</dbReference>
<dbReference type="AGR" id="MGI:106426"/>
<dbReference type="CTD" id="66817"/>
<dbReference type="MGI" id="MGI:106426">
    <property type="gene designation" value="Tmem170"/>
</dbReference>
<dbReference type="VEuPathDB" id="HostDB:ENSMUSG00000031953"/>
<dbReference type="eggNOG" id="KOG4349">
    <property type="taxonomic scope" value="Eukaryota"/>
</dbReference>
<dbReference type="GeneTree" id="ENSGT00940000159189"/>
<dbReference type="HOGENOM" id="CLU_149050_1_1_1"/>
<dbReference type="InParanoid" id="Q9D342"/>
<dbReference type="OMA" id="GRFMSVG"/>
<dbReference type="OrthoDB" id="13807at2759"/>
<dbReference type="PhylomeDB" id="Q9D342"/>
<dbReference type="TreeFam" id="TF314615"/>
<dbReference type="BioGRID-ORCS" id="66817">
    <property type="hits" value="1 hit in 77 CRISPR screens"/>
</dbReference>
<dbReference type="ChiTaRS" id="Tmem170">
    <property type="organism name" value="mouse"/>
</dbReference>
<dbReference type="PRO" id="PR:Q9D342"/>
<dbReference type="Proteomes" id="UP000000589">
    <property type="component" value="Chromosome 8"/>
</dbReference>
<dbReference type="RNAct" id="Q9D342">
    <property type="molecule type" value="protein"/>
</dbReference>
<dbReference type="Bgee" id="ENSMUSG00000031953">
    <property type="expression patterns" value="Expressed in metanephric cortical collecting duct and 219 other cell types or tissues"/>
</dbReference>
<dbReference type="GO" id="GO:0005789">
    <property type="term" value="C:endoplasmic reticulum membrane"/>
    <property type="evidence" value="ECO:0000250"/>
    <property type="project" value="UniProtKB"/>
</dbReference>
<dbReference type="GO" id="GO:0005635">
    <property type="term" value="C:nuclear envelope"/>
    <property type="evidence" value="ECO:0000250"/>
    <property type="project" value="UniProtKB"/>
</dbReference>
<dbReference type="GO" id="GO:0071786">
    <property type="term" value="P:endoplasmic reticulum tubular network organization"/>
    <property type="evidence" value="ECO:0000250"/>
    <property type="project" value="UniProtKB"/>
</dbReference>
<dbReference type="GO" id="GO:0006998">
    <property type="term" value="P:nuclear envelope organization"/>
    <property type="evidence" value="ECO:0000250"/>
    <property type="project" value="UniProtKB"/>
</dbReference>
<dbReference type="GO" id="GO:0051292">
    <property type="term" value="P:nuclear pore complex assembly"/>
    <property type="evidence" value="ECO:0000250"/>
    <property type="project" value="UniProtKB"/>
</dbReference>
<dbReference type="InterPro" id="IPR019334">
    <property type="entry name" value="Transmembrane_pr_170"/>
</dbReference>
<dbReference type="PANTHER" id="PTHR22779">
    <property type="entry name" value="SD17342P"/>
    <property type="match status" value="1"/>
</dbReference>
<dbReference type="PANTHER" id="PTHR22779:SF2">
    <property type="entry name" value="TRANSMEMBRANE PROTEIN 170A"/>
    <property type="match status" value="1"/>
</dbReference>
<dbReference type="Pfam" id="PF10190">
    <property type="entry name" value="Tmemb_170"/>
    <property type="match status" value="1"/>
</dbReference>
<protein>
    <recommendedName>
        <fullName>Transmembrane protein 170A</fullName>
    </recommendedName>
</protein>
<name>T170A_MOUSE</name>
<comment type="function">
    <text evidence="1">Acts as a regulator of endoplasmic reticulum (ER) and nuclear envelope (NE) morphogenesis. Affects the ratio between tubular ER and ER sheets by promoting sheet formation at the expense of tubules. Influences NE expansion, nuclear pore complex formation and proper localization of inner nuclear membrane proteins.</text>
</comment>
<comment type="subunit">
    <text evidence="1">Interacts with RTN4.</text>
</comment>
<comment type="subcellular location">
    <subcellularLocation>
        <location evidence="1">Endoplasmic reticulum membrane</location>
        <topology evidence="2">Multi-pass membrane protein</topology>
    </subcellularLocation>
    <subcellularLocation>
        <location evidence="1">Nucleus envelope</location>
    </subcellularLocation>
</comment>
<comment type="similarity">
    <text evidence="3">Belongs to the TMEM170 family.</text>
</comment>
<evidence type="ECO:0000250" key="1">
    <source>
        <dbReference type="UniProtKB" id="Q8WVE7"/>
    </source>
</evidence>
<evidence type="ECO:0000255" key="2"/>
<evidence type="ECO:0000305" key="3"/>
<proteinExistence type="evidence at transcript level"/>